<organism>
    <name type="scientific">Deinococcus geothermalis (strain DSM 11300 / CIP 105573 / AG-3a)</name>
    <dbReference type="NCBI Taxonomy" id="319795"/>
    <lineage>
        <taxon>Bacteria</taxon>
        <taxon>Thermotogati</taxon>
        <taxon>Deinococcota</taxon>
        <taxon>Deinococci</taxon>
        <taxon>Deinococcales</taxon>
        <taxon>Deinococcaceae</taxon>
        <taxon>Deinococcus</taxon>
    </lineage>
</organism>
<keyword id="KW-0665">Pyrimidine biosynthesis</keyword>
<keyword id="KW-0808">Transferase</keyword>
<reference key="1">
    <citation type="submission" date="2006-04" db="EMBL/GenBank/DDBJ databases">
        <title>Complete sequence of chromosome of Deinococcus geothermalis DSM 11300.</title>
        <authorList>
            <person name="Copeland A."/>
            <person name="Lucas S."/>
            <person name="Lapidus A."/>
            <person name="Barry K."/>
            <person name="Detter J.C."/>
            <person name="Glavina del Rio T."/>
            <person name="Hammon N."/>
            <person name="Israni S."/>
            <person name="Dalin E."/>
            <person name="Tice H."/>
            <person name="Pitluck S."/>
            <person name="Brettin T."/>
            <person name="Bruce D."/>
            <person name="Han C."/>
            <person name="Tapia R."/>
            <person name="Saunders E."/>
            <person name="Gilna P."/>
            <person name="Schmutz J."/>
            <person name="Larimer F."/>
            <person name="Land M."/>
            <person name="Hauser L."/>
            <person name="Kyrpides N."/>
            <person name="Kim E."/>
            <person name="Daly M.J."/>
            <person name="Fredrickson J.K."/>
            <person name="Makarova K.S."/>
            <person name="Gaidamakova E.K."/>
            <person name="Zhai M."/>
            <person name="Richardson P."/>
        </authorList>
    </citation>
    <scope>NUCLEOTIDE SEQUENCE [LARGE SCALE GENOMIC DNA]</scope>
    <source>
        <strain>DSM 11300 / CIP 105573 / AG-3a</strain>
    </source>
</reference>
<proteinExistence type="inferred from homology"/>
<accession>Q1J129</accession>
<feature type="chain" id="PRO_0000321097" description="Aspartate carbamoyltransferase catalytic subunit">
    <location>
        <begin position="1"/>
        <end position="312"/>
    </location>
</feature>
<feature type="binding site" evidence="1">
    <location>
        <position position="62"/>
    </location>
    <ligand>
        <name>carbamoyl phosphate</name>
        <dbReference type="ChEBI" id="CHEBI:58228"/>
    </ligand>
</feature>
<feature type="binding site" evidence="1">
    <location>
        <position position="63"/>
    </location>
    <ligand>
        <name>carbamoyl phosphate</name>
        <dbReference type="ChEBI" id="CHEBI:58228"/>
    </ligand>
</feature>
<feature type="binding site" evidence="1">
    <location>
        <position position="90"/>
    </location>
    <ligand>
        <name>L-aspartate</name>
        <dbReference type="ChEBI" id="CHEBI:29991"/>
    </ligand>
</feature>
<feature type="binding site" evidence="1">
    <location>
        <position position="112"/>
    </location>
    <ligand>
        <name>carbamoyl phosphate</name>
        <dbReference type="ChEBI" id="CHEBI:58228"/>
    </ligand>
</feature>
<feature type="binding site" evidence="1">
    <location>
        <position position="140"/>
    </location>
    <ligand>
        <name>carbamoyl phosphate</name>
        <dbReference type="ChEBI" id="CHEBI:58228"/>
    </ligand>
</feature>
<feature type="binding site" evidence="1">
    <location>
        <position position="143"/>
    </location>
    <ligand>
        <name>carbamoyl phosphate</name>
        <dbReference type="ChEBI" id="CHEBI:58228"/>
    </ligand>
</feature>
<feature type="binding site" evidence="1">
    <location>
        <position position="173"/>
    </location>
    <ligand>
        <name>L-aspartate</name>
        <dbReference type="ChEBI" id="CHEBI:29991"/>
    </ligand>
</feature>
<feature type="binding site" evidence="1">
    <location>
        <position position="228"/>
    </location>
    <ligand>
        <name>L-aspartate</name>
        <dbReference type="ChEBI" id="CHEBI:29991"/>
    </ligand>
</feature>
<feature type="binding site" evidence="1">
    <location>
        <position position="269"/>
    </location>
    <ligand>
        <name>carbamoyl phosphate</name>
        <dbReference type="ChEBI" id="CHEBI:58228"/>
    </ligand>
</feature>
<feature type="binding site" evidence="1">
    <location>
        <position position="270"/>
    </location>
    <ligand>
        <name>carbamoyl phosphate</name>
        <dbReference type="ChEBI" id="CHEBI:58228"/>
    </ligand>
</feature>
<dbReference type="EC" id="2.1.3.2" evidence="1"/>
<dbReference type="EMBL" id="CP000359">
    <property type="protein sequence ID" value="ABF44805.1"/>
    <property type="molecule type" value="Genomic_DNA"/>
</dbReference>
<dbReference type="RefSeq" id="WP_011529647.1">
    <property type="nucleotide sequence ID" value="NC_008025.1"/>
</dbReference>
<dbReference type="SMR" id="Q1J129"/>
<dbReference type="STRING" id="319795.Dgeo_0503"/>
<dbReference type="KEGG" id="dge:Dgeo_0503"/>
<dbReference type="eggNOG" id="COG0540">
    <property type="taxonomic scope" value="Bacteria"/>
</dbReference>
<dbReference type="HOGENOM" id="CLU_043846_2_0_0"/>
<dbReference type="UniPathway" id="UPA00070">
    <property type="reaction ID" value="UER00116"/>
</dbReference>
<dbReference type="Proteomes" id="UP000002431">
    <property type="component" value="Chromosome"/>
</dbReference>
<dbReference type="GO" id="GO:0005829">
    <property type="term" value="C:cytosol"/>
    <property type="evidence" value="ECO:0007669"/>
    <property type="project" value="TreeGrafter"/>
</dbReference>
<dbReference type="GO" id="GO:0016597">
    <property type="term" value="F:amino acid binding"/>
    <property type="evidence" value="ECO:0007669"/>
    <property type="project" value="InterPro"/>
</dbReference>
<dbReference type="GO" id="GO:0004070">
    <property type="term" value="F:aspartate carbamoyltransferase activity"/>
    <property type="evidence" value="ECO:0007669"/>
    <property type="project" value="UniProtKB-UniRule"/>
</dbReference>
<dbReference type="GO" id="GO:0006207">
    <property type="term" value="P:'de novo' pyrimidine nucleobase biosynthetic process"/>
    <property type="evidence" value="ECO:0007669"/>
    <property type="project" value="InterPro"/>
</dbReference>
<dbReference type="GO" id="GO:0044205">
    <property type="term" value="P:'de novo' UMP biosynthetic process"/>
    <property type="evidence" value="ECO:0007669"/>
    <property type="project" value="UniProtKB-UniRule"/>
</dbReference>
<dbReference type="GO" id="GO:0006520">
    <property type="term" value="P:amino acid metabolic process"/>
    <property type="evidence" value="ECO:0007669"/>
    <property type="project" value="InterPro"/>
</dbReference>
<dbReference type="FunFam" id="3.40.50.1370:FF:000007">
    <property type="entry name" value="Aspartate carbamoyltransferase"/>
    <property type="match status" value="1"/>
</dbReference>
<dbReference type="Gene3D" id="3.40.50.1370">
    <property type="entry name" value="Aspartate/ornithine carbamoyltransferase"/>
    <property type="match status" value="2"/>
</dbReference>
<dbReference type="HAMAP" id="MF_00001">
    <property type="entry name" value="Asp_carb_tr"/>
    <property type="match status" value="1"/>
</dbReference>
<dbReference type="InterPro" id="IPR006132">
    <property type="entry name" value="Asp/Orn_carbamoyltranf_P-bd"/>
</dbReference>
<dbReference type="InterPro" id="IPR006130">
    <property type="entry name" value="Asp/Orn_carbamoylTrfase"/>
</dbReference>
<dbReference type="InterPro" id="IPR036901">
    <property type="entry name" value="Asp/Orn_carbamoylTrfase_sf"/>
</dbReference>
<dbReference type="InterPro" id="IPR002082">
    <property type="entry name" value="Asp_carbamoyltransf"/>
</dbReference>
<dbReference type="InterPro" id="IPR006131">
    <property type="entry name" value="Asp_carbamoyltransf_Asp/Orn-bd"/>
</dbReference>
<dbReference type="NCBIfam" id="TIGR00670">
    <property type="entry name" value="asp_carb_tr"/>
    <property type="match status" value="1"/>
</dbReference>
<dbReference type="NCBIfam" id="NF002032">
    <property type="entry name" value="PRK00856.1"/>
    <property type="match status" value="1"/>
</dbReference>
<dbReference type="PANTHER" id="PTHR45753:SF6">
    <property type="entry name" value="ASPARTATE CARBAMOYLTRANSFERASE"/>
    <property type="match status" value="1"/>
</dbReference>
<dbReference type="PANTHER" id="PTHR45753">
    <property type="entry name" value="ORNITHINE CARBAMOYLTRANSFERASE, MITOCHONDRIAL"/>
    <property type="match status" value="1"/>
</dbReference>
<dbReference type="Pfam" id="PF00185">
    <property type="entry name" value="OTCace"/>
    <property type="match status" value="1"/>
</dbReference>
<dbReference type="Pfam" id="PF02729">
    <property type="entry name" value="OTCace_N"/>
    <property type="match status" value="1"/>
</dbReference>
<dbReference type="PRINTS" id="PR00100">
    <property type="entry name" value="AOTCASE"/>
</dbReference>
<dbReference type="PRINTS" id="PR00101">
    <property type="entry name" value="ATCASE"/>
</dbReference>
<dbReference type="SUPFAM" id="SSF53671">
    <property type="entry name" value="Aspartate/ornithine carbamoyltransferase"/>
    <property type="match status" value="1"/>
</dbReference>
<dbReference type="PROSITE" id="PS00097">
    <property type="entry name" value="CARBAMOYLTRANSFERASE"/>
    <property type="match status" value="1"/>
</dbReference>
<protein>
    <recommendedName>
        <fullName evidence="1">Aspartate carbamoyltransferase catalytic subunit</fullName>
        <ecNumber evidence="1">2.1.3.2</ecNumber>
    </recommendedName>
    <alternativeName>
        <fullName evidence="1">Aspartate transcarbamylase</fullName>
        <shortName evidence="1">ATCase</shortName>
    </alternativeName>
</protein>
<sequence length="312" mass="33803">MTVLAPPRPRSLLDFQDWLPERLSALLDNADTMHQVLERPVRKVPALQGLTVCTAFFENSTRTRISFELAARRMSADVISFAAGASSLSKGESLRDTVEVLSAYKVDAFVVRHPASGAAHLIARYSGKPVINAGDGRRAHPTQALLDAYTIRQEYGSLAGKKVAIIGDIRHSRVARSNAELLPKLGAEVVLAGPATLLPADLAALPGVTVTTDPKEAVHGAHAVMALRLQQERMNAGYLASLQEYVERYQVNEALLREAESGAIVLHPGPLNRDLEISSEVADGPQSRILKQVENGQAVRMSVLYHLLVGRD</sequence>
<gene>
    <name evidence="1" type="primary">pyrB</name>
    <name type="ordered locus">Dgeo_0503</name>
</gene>
<comment type="function">
    <text evidence="1">Catalyzes the condensation of carbamoyl phosphate and aspartate to form carbamoyl aspartate and inorganic phosphate, the committed step in the de novo pyrimidine nucleotide biosynthesis pathway.</text>
</comment>
<comment type="catalytic activity">
    <reaction evidence="1">
        <text>carbamoyl phosphate + L-aspartate = N-carbamoyl-L-aspartate + phosphate + H(+)</text>
        <dbReference type="Rhea" id="RHEA:20013"/>
        <dbReference type="ChEBI" id="CHEBI:15378"/>
        <dbReference type="ChEBI" id="CHEBI:29991"/>
        <dbReference type="ChEBI" id="CHEBI:32814"/>
        <dbReference type="ChEBI" id="CHEBI:43474"/>
        <dbReference type="ChEBI" id="CHEBI:58228"/>
        <dbReference type="EC" id="2.1.3.2"/>
    </reaction>
</comment>
<comment type="pathway">
    <text evidence="1">Pyrimidine metabolism; UMP biosynthesis via de novo pathway; (S)-dihydroorotate from bicarbonate: step 2/3.</text>
</comment>
<comment type="subunit">
    <text evidence="1">Heterododecamer (2C3:3R2) of six catalytic PyrB chains organized as two trimers (C3), and six regulatory PyrI chains organized as three dimers (R2).</text>
</comment>
<comment type="similarity">
    <text evidence="1">Belongs to the aspartate/ornithine carbamoyltransferase superfamily. ATCase family.</text>
</comment>
<name>PYRB_DEIGD</name>
<evidence type="ECO:0000255" key="1">
    <source>
        <dbReference type="HAMAP-Rule" id="MF_00001"/>
    </source>
</evidence>